<gene>
    <name type="primary">ATRY</name>
</gene>
<organism>
    <name type="scientific">Notamacropus eugenii</name>
    <name type="common">Tammar wallaby</name>
    <name type="synonym">Macropus eugenii</name>
    <dbReference type="NCBI Taxonomy" id="9315"/>
    <lineage>
        <taxon>Eukaryota</taxon>
        <taxon>Metazoa</taxon>
        <taxon>Chordata</taxon>
        <taxon>Craniata</taxon>
        <taxon>Vertebrata</taxon>
        <taxon>Euteleostomi</taxon>
        <taxon>Mammalia</taxon>
        <taxon>Metatheria</taxon>
        <taxon>Diprotodontia</taxon>
        <taxon>Macropodidae</taxon>
        <taxon>Notamacropus</taxon>
    </lineage>
</organism>
<comment type="function">
    <text evidence="2">Could be a global transcriptional regulator. Modifies gene expression by affecting chromatin (By similarity).</text>
</comment>
<comment type="catalytic activity">
    <reaction>
        <text>ATP + H2O = ADP + phosphate + H(+)</text>
        <dbReference type="Rhea" id="RHEA:13065"/>
        <dbReference type="ChEBI" id="CHEBI:15377"/>
        <dbReference type="ChEBI" id="CHEBI:15378"/>
        <dbReference type="ChEBI" id="CHEBI:30616"/>
        <dbReference type="ChEBI" id="CHEBI:43474"/>
        <dbReference type="ChEBI" id="CHEBI:456216"/>
        <dbReference type="EC" id="3.6.4.12"/>
    </reaction>
</comment>
<comment type="subcellular location">
    <subcellularLocation>
        <location evidence="1">Nucleus</location>
    </subcellularLocation>
</comment>
<comment type="tissue specificity">
    <text evidence="4">Expressed in developing and adult testis. Also weakly expressed in prostate and epididymis.</text>
</comment>
<comment type="similarity">
    <text evidence="6">Belongs to the SNF2/RAD54 helicase family.</text>
</comment>
<feature type="chain" id="PRO_0000074307" description="Transcriptional regulator ATRY">
    <location>
        <begin position="1" status="less than"/>
        <end position="96" status="greater than"/>
    </location>
</feature>
<feature type="domain" description="ADD" evidence="3">
    <location>
        <begin position="1" status="less than"/>
        <end position="96"/>
    </location>
</feature>
<feature type="zinc finger region" description="GATA-type; atypical" evidence="3">
    <location>
        <begin position="1" status="less than"/>
        <end position="12"/>
    </location>
</feature>
<feature type="zinc finger region" description="PHD-type; atypical" evidence="3">
    <location>
        <begin position="27"/>
        <end position="82"/>
    </location>
</feature>
<feature type="non-consecutive residues" evidence="5">
    <location>
        <begin position="30"/>
        <end position="31"/>
    </location>
</feature>
<feature type="non-terminal residue" evidence="5">
    <location>
        <position position="1"/>
    </location>
</feature>
<feature type="non-terminal residue" evidence="5">
    <location>
        <position position="96"/>
    </location>
</feature>
<accession>P83946</accession>
<name>ATRY_NOTEU</name>
<keyword id="KW-0067">ATP-binding</keyword>
<keyword id="KW-0227">DNA damage</keyword>
<keyword id="KW-0234">DNA repair</keyword>
<keyword id="KW-0238">DNA-binding</keyword>
<keyword id="KW-0347">Helicase</keyword>
<keyword id="KW-0378">Hydrolase</keyword>
<keyword id="KW-0479">Metal-binding</keyword>
<keyword id="KW-0547">Nucleotide-binding</keyword>
<keyword id="KW-0539">Nucleus</keyword>
<keyword id="KW-0862">Zinc</keyword>
<keyword id="KW-0863">Zinc-finger</keyword>
<protein>
    <recommendedName>
        <fullName>Transcriptional regulator ATRY</fullName>
        <ecNumber>3.6.4.12</ecNumber>
    </recommendedName>
    <alternativeName>
        <fullName>ATP-dependent helicase ATRY</fullName>
    </alternativeName>
</protein>
<dbReference type="EC" id="3.6.4.12"/>
<dbReference type="EMBL" id="AF303445">
    <property type="status" value="NOT_ANNOTATED_CDS"/>
    <property type="molecule type" value="Genomic_DNA"/>
</dbReference>
<dbReference type="SMR" id="P83946"/>
<dbReference type="GO" id="GO:0005634">
    <property type="term" value="C:nucleus"/>
    <property type="evidence" value="ECO:0007669"/>
    <property type="project" value="UniProtKB-SubCell"/>
</dbReference>
<dbReference type="GO" id="GO:0005721">
    <property type="term" value="C:pericentric heterochromatin"/>
    <property type="evidence" value="ECO:0007669"/>
    <property type="project" value="TreeGrafter"/>
</dbReference>
<dbReference type="GO" id="GO:0005524">
    <property type="term" value="F:ATP binding"/>
    <property type="evidence" value="ECO:0007669"/>
    <property type="project" value="UniProtKB-KW"/>
</dbReference>
<dbReference type="GO" id="GO:0016887">
    <property type="term" value="F:ATP hydrolysis activity"/>
    <property type="evidence" value="ECO:0007669"/>
    <property type="project" value="RHEA"/>
</dbReference>
<dbReference type="GO" id="GO:0031490">
    <property type="term" value="F:chromatin DNA binding"/>
    <property type="evidence" value="ECO:0007669"/>
    <property type="project" value="TreeGrafter"/>
</dbReference>
<dbReference type="GO" id="GO:0004386">
    <property type="term" value="F:helicase activity"/>
    <property type="evidence" value="ECO:0007669"/>
    <property type="project" value="UniProtKB-KW"/>
</dbReference>
<dbReference type="GO" id="GO:0035064">
    <property type="term" value="F:methylated histone binding"/>
    <property type="evidence" value="ECO:0007669"/>
    <property type="project" value="TreeGrafter"/>
</dbReference>
<dbReference type="GO" id="GO:0008270">
    <property type="term" value="F:zinc ion binding"/>
    <property type="evidence" value="ECO:0007669"/>
    <property type="project" value="UniProtKB-KW"/>
</dbReference>
<dbReference type="GO" id="GO:0006338">
    <property type="term" value="P:chromatin remodeling"/>
    <property type="evidence" value="ECO:0007669"/>
    <property type="project" value="TreeGrafter"/>
</dbReference>
<dbReference type="GO" id="GO:0006281">
    <property type="term" value="P:DNA repair"/>
    <property type="evidence" value="ECO:0007669"/>
    <property type="project" value="UniProtKB-KW"/>
</dbReference>
<dbReference type="GO" id="GO:0010558">
    <property type="term" value="P:negative regulation of macromolecule biosynthetic process"/>
    <property type="evidence" value="ECO:0007669"/>
    <property type="project" value="UniProtKB-ARBA"/>
</dbReference>
<dbReference type="GO" id="GO:0010468">
    <property type="term" value="P:regulation of gene expression"/>
    <property type="evidence" value="ECO:0007669"/>
    <property type="project" value="UniProtKB-ARBA"/>
</dbReference>
<dbReference type="GO" id="GO:0031297">
    <property type="term" value="P:replication fork processing"/>
    <property type="evidence" value="ECO:0007669"/>
    <property type="project" value="TreeGrafter"/>
</dbReference>
<dbReference type="Gene3D" id="3.30.40.10">
    <property type="entry name" value="Zinc/RING finger domain, C3HC4 (zinc finger)"/>
    <property type="match status" value="1"/>
</dbReference>
<dbReference type="InterPro" id="IPR025766">
    <property type="entry name" value="ADD"/>
</dbReference>
<dbReference type="InterPro" id="IPR041430">
    <property type="entry name" value="ADD_ATRX"/>
</dbReference>
<dbReference type="InterPro" id="IPR052131">
    <property type="entry name" value="ATRX_domain-containing"/>
</dbReference>
<dbReference type="InterPro" id="IPR011011">
    <property type="entry name" value="Znf_FYVE_PHD"/>
</dbReference>
<dbReference type="InterPro" id="IPR013083">
    <property type="entry name" value="Znf_RING/FYVE/PHD"/>
</dbReference>
<dbReference type="PANTHER" id="PTHR46357">
    <property type="entry name" value="TRANSCRIPTIONAL REGULATOR ATRX"/>
    <property type="match status" value="1"/>
</dbReference>
<dbReference type="PANTHER" id="PTHR46357:SF1">
    <property type="entry name" value="TRANSCRIPTIONAL REGULATOR ATRX"/>
    <property type="match status" value="1"/>
</dbReference>
<dbReference type="Pfam" id="PF17981">
    <property type="entry name" value="ADD_ATRX"/>
    <property type="match status" value="1"/>
</dbReference>
<dbReference type="SUPFAM" id="SSF57903">
    <property type="entry name" value="FYVE/PHD zinc finger"/>
    <property type="match status" value="1"/>
</dbReference>
<dbReference type="PROSITE" id="PS51533">
    <property type="entry name" value="ADD"/>
    <property type="match status" value="1"/>
</dbReference>
<proteinExistence type="evidence at transcript level"/>
<sequence>VICTACGQQVNQFQKDSIYRHPTLNVLICKRWCAEGGNLICCDSCHNAFCKKCIWRNLGRKEISKIMNEKNEWHCYICCPEPLLDLIAVCDSVLEN</sequence>
<reference evidence="6" key="1">
    <citation type="journal article" date="2000" name="Proc. Natl. Acad. Sci. U.S.A.">
        <title>The human sex-reversing ATRX gene has a homologue on the marsupial Y chromosome, ATRY: implications for the evolution of mammalian sex determination.</title>
        <authorList>
            <person name="Pask A."/>
            <person name="Renfree M.B."/>
            <person name="Marshall Graves J.A."/>
        </authorList>
    </citation>
    <scope>NUCLEOTIDE SEQUENCE [GENOMIC DNA]</scope>
    <scope>TISSUE SPECIFICITY</scope>
</reference>
<evidence type="ECO:0000250" key="1"/>
<evidence type="ECO:0000250" key="2">
    <source>
        <dbReference type="UniProtKB" id="Q61687"/>
    </source>
</evidence>
<evidence type="ECO:0000255" key="3">
    <source>
        <dbReference type="PROSITE-ProRule" id="PRU00865"/>
    </source>
</evidence>
<evidence type="ECO:0000269" key="4">
    <source>
    </source>
</evidence>
<evidence type="ECO:0000303" key="5">
    <source>
    </source>
</evidence>
<evidence type="ECO:0000305" key="6"/>